<reference key="1">
    <citation type="journal article" date="2006" name="Environ. Microbiol.">
        <title>Whole genome analysis of the marine Bacteroidetes'Gramella forsetii' reveals adaptations to degradation of polymeric organic matter.</title>
        <authorList>
            <person name="Bauer M."/>
            <person name="Kube M."/>
            <person name="Teeling H."/>
            <person name="Richter M."/>
            <person name="Lombardot T."/>
            <person name="Allers E."/>
            <person name="Wuerdemann C.A."/>
            <person name="Quast C."/>
            <person name="Kuhl H."/>
            <person name="Knaust F."/>
            <person name="Woebken D."/>
            <person name="Bischof K."/>
            <person name="Mussmann M."/>
            <person name="Choudhuri J.V."/>
            <person name="Meyer F."/>
            <person name="Reinhardt R."/>
            <person name="Amann R.I."/>
            <person name="Gloeckner F.O."/>
        </authorList>
    </citation>
    <scope>NUCLEOTIDE SEQUENCE [LARGE SCALE GENOMIC DNA]</scope>
    <source>
        <strain>DSM 17595 / CGMCC 1.15422 / KT0803</strain>
    </source>
</reference>
<name>RISB_CHRFK</name>
<protein>
    <recommendedName>
        <fullName evidence="1">6,7-dimethyl-8-ribityllumazine synthase</fullName>
        <shortName evidence="1">DMRL synthase</shortName>
        <shortName evidence="1">LS</shortName>
        <shortName evidence="1">Lumazine synthase</shortName>
        <ecNumber evidence="1">2.5.1.78</ecNumber>
    </recommendedName>
</protein>
<evidence type="ECO:0000255" key="1">
    <source>
        <dbReference type="HAMAP-Rule" id="MF_00178"/>
    </source>
</evidence>
<keyword id="KW-0686">Riboflavin biosynthesis</keyword>
<keyword id="KW-0808">Transferase</keyword>
<sequence>MATEGNNLSQYDKNTIPNAKDFRFGIVVSEWNEEITEGLFQGAFDAWIENGVQKENIVRWNVPGSFELIYGCKKMQQSFEMLDAIVAVGNVIQGETKHFDFVCDGVTQGIKDLNVQTDIPVIFCVLTDNNIEQSRARSGGKHGNKGTEAAIAAIKMAQLRKDAKFYKG</sequence>
<comment type="function">
    <text evidence="1">Catalyzes the formation of 6,7-dimethyl-8-ribityllumazine by condensation of 5-amino-6-(D-ribitylamino)uracil with 3,4-dihydroxy-2-butanone 4-phosphate. This is the penultimate step in the biosynthesis of riboflavin.</text>
</comment>
<comment type="catalytic activity">
    <reaction evidence="1">
        <text>(2S)-2-hydroxy-3-oxobutyl phosphate + 5-amino-6-(D-ribitylamino)uracil = 6,7-dimethyl-8-(1-D-ribityl)lumazine + phosphate + 2 H2O + H(+)</text>
        <dbReference type="Rhea" id="RHEA:26152"/>
        <dbReference type="ChEBI" id="CHEBI:15377"/>
        <dbReference type="ChEBI" id="CHEBI:15378"/>
        <dbReference type="ChEBI" id="CHEBI:15934"/>
        <dbReference type="ChEBI" id="CHEBI:43474"/>
        <dbReference type="ChEBI" id="CHEBI:58201"/>
        <dbReference type="ChEBI" id="CHEBI:58830"/>
        <dbReference type="EC" id="2.5.1.78"/>
    </reaction>
</comment>
<comment type="pathway">
    <text evidence="1">Cofactor biosynthesis; riboflavin biosynthesis; riboflavin from 2-hydroxy-3-oxobutyl phosphate and 5-amino-6-(D-ribitylamino)uracil: step 1/2.</text>
</comment>
<comment type="similarity">
    <text evidence="1">Belongs to the DMRL synthase family.</text>
</comment>
<organism>
    <name type="scientific">Christiangramia forsetii (strain DSM 17595 / CGMCC 1.15422 / KT0803)</name>
    <name type="common">Gramella forsetii</name>
    <dbReference type="NCBI Taxonomy" id="411154"/>
    <lineage>
        <taxon>Bacteria</taxon>
        <taxon>Pseudomonadati</taxon>
        <taxon>Bacteroidota</taxon>
        <taxon>Flavobacteriia</taxon>
        <taxon>Flavobacteriales</taxon>
        <taxon>Flavobacteriaceae</taxon>
        <taxon>Christiangramia</taxon>
    </lineage>
</organism>
<gene>
    <name evidence="1" type="primary">ribH</name>
    <name type="ordered locus">GFO_0795</name>
</gene>
<proteinExistence type="inferred from homology"/>
<feature type="chain" id="PRO_1000040426" description="6,7-dimethyl-8-ribityllumazine synthase">
    <location>
        <begin position="1"/>
        <end position="168"/>
    </location>
</feature>
<feature type="active site" description="Proton donor" evidence="1">
    <location>
        <position position="98"/>
    </location>
</feature>
<feature type="binding site" evidence="1">
    <location>
        <position position="31"/>
    </location>
    <ligand>
        <name>5-amino-6-(D-ribitylamino)uracil</name>
        <dbReference type="ChEBI" id="CHEBI:15934"/>
    </ligand>
</feature>
<feature type="binding site" evidence="1">
    <location>
        <begin position="65"/>
        <end position="67"/>
    </location>
    <ligand>
        <name>5-amino-6-(D-ribitylamino)uracil</name>
        <dbReference type="ChEBI" id="CHEBI:15934"/>
    </ligand>
</feature>
<feature type="binding site" evidence="1">
    <location>
        <begin position="90"/>
        <end position="92"/>
    </location>
    <ligand>
        <name>5-amino-6-(D-ribitylamino)uracil</name>
        <dbReference type="ChEBI" id="CHEBI:15934"/>
    </ligand>
</feature>
<feature type="binding site" evidence="1">
    <location>
        <begin position="95"/>
        <end position="96"/>
    </location>
    <ligand>
        <name>(2S)-2-hydroxy-3-oxobutyl phosphate</name>
        <dbReference type="ChEBI" id="CHEBI:58830"/>
    </ligand>
</feature>
<feature type="binding site" evidence="1">
    <location>
        <position position="123"/>
    </location>
    <ligand>
        <name>5-amino-6-(D-ribitylamino)uracil</name>
        <dbReference type="ChEBI" id="CHEBI:15934"/>
    </ligand>
</feature>
<feature type="binding site" evidence="1">
    <location>
        <position position="137"/>
    </location>
    <ligand>
        <name>(2S)-2-hydroxy-3-oxobutyl phosphate</name>
        <dbReference type="ChEBI" id="CHEBI:58830"/>
    </ligand>
</feature>
<dbReference type="EC" id="2.5.1.78" evidence="1"/>
<dbReference type="EMBL" id="CU207366">
    <property type="protein sequence ID" value="CAL65771.1"/>
    <property type="molecule type" value="Genomic_DNA"/>
</dbReference>
<dbReference type="RefSeq" id="WP_011708708.1">
    <property type="nucleotide sequence ID" value="NC_008571.1"/>
</dbReference>
<dbReference type="SMR" id="A0LZH6"/>
<dbReference type="STRING" id="411154.GFO_0795"/>
<dbReference type="KEGG" id="gfo:GFO_0795"/>
<dbReference type="eggNOG" id="COG0054">
    <property type="taxonomic scope" value="Bacteria"/>
</dbReference>
<dbReference type="HOGENOM" id="CLU_089358_1_2_10"/>
<dbReference type="OrthoDB" id="9809709at2"/>
<dbReference type="UniPathway" id="UPA00275">
    <property type="reaction ID" value="UER00404"/>
</dbReference>
<dbReference type="Proteomes" id="UP000000755">
    <property type="component" value="Chromosome"/>
</dbReference>
<dbReference type="GO" id="GO:0005829">
    <property type="term" value="C:cytosol"/>
    <property type="evidence" value="ECO:0007669"/>
    <property type="project" value="TreeGrafter"/>
</dbReference>
<dbReference type="GO" id="GO:0009349">
    <property type="term" value="C:riboflavin synthase complex"/>
    <property type="evidence" value="ECO:0007669"/>
    <property type="project" value="InterPro"/>
</dbReference>
<dbReference type="GO" id="GO:0000906">
    <property type="term" value="F:6,7-dimethyl-8-ribityllumazine synthase activity"/>
    <property type="evidence" value="ECO:0007669"/>
    <property type="project" value="UniProtKB-UniRule"/>
</dbReference>
<dbReference type="GO" id="GO:0009231">
    <property type="term" value="P:riboflavin biosynthetic process"/>
    <property type="evidence" value="ECO:0007669"/>
    <property type="project" value="UniProtKB-UniRule"/>
</dbReference>
<dbReference type="CDD" id="cd09209">
    <property type="entry name" value="Lumazine_synthase-I"/>
    <property type="match status" value="1"/>
</dbReference>
<dbReference type="Gene3D" id="3.40.50.960">
    <property type="entry name" value="Lumazine/riboflavin synthase"/>
    <property type="match status" value="1"/>
</dbReference>
<dbReference type="HAMAP" id="MF_00178">
    <property type="entry name" value="Lumazine_synth"/>
    <property type="match status" value="1"/>
</dbReference>
<dbReference type="InterPro" id="IPR034964">
    <property type="entry name" value="LS"/>
</dbReference>
<dbReference type="InterPro" id="IPR002180">
    <property type="entry name" value="LS/RS"/>
</dbReference>
<dbReference type="InterPro" id="IPR036467">
    <property type="entry name" value="LS/RS_sf"/>
</dbReference>
<dbReference type="NCBIfam" id="TIGR00114">
    <property type="entry name" value="lumazine-synth"/>
    <property type="match status" value="1"/>
</dbReference>
<dbReference type="PANTHER" id="PTHR21058:SF0">
    <property type="entry name" value="6,7-DIMETHYL-8-RIBITYLLUMAZINE SYNTHASE"/>
    <property type="match status" value="1"/>
</dbReference>
<dbReference type="PANTHER" id="PTHR21058">
    <property type="entry name" value="6,7-DIMETHYL-8-RIBITYLLUMAZINE SYNTHASE DMRL SYNTHASE LUMAZINE SYNTHASE"/>
    <property type="match status" value="1"/>
</dbReference>
<dbReference type="Pfam" id="PF00885">
    <property type="entry name" value="DMRL_synthase"/>
    <property type="match status" value="1"/>
</dbReference>
<dbReference type="SUPFAM" id="SSF52121">
    <property type="entry name" value="Lumazine synthase"/>
    <property type="match status" value="1"/>
</dbReference>
<accession>A0LZH6</accession>